<evidence type="ECO:0000255" key="1">
    <source>
        <dbReference type="HAMAP-Rule" id="MF_00186"/>
    </source>
</evidence>
<gene>
    <name evidence="1" type="primary">glpK</name>
    <name type="ordered locus">MW1183</name>
</gene>
<sequence length="498" mass="55638">MEKYILSIDQGTTSSRAILFNQKGEIAGVAQREFKQYFPQSGWVEHDANEIWTSVLAVMTEVINENDVRADQIAGIGITNQRETTVVWDKHTGRPIYHAIVWQSRQTQSICSELKQQGYEQTFRDKTGLLLDPYFAGTKVKWILDNVEGAREKAENGDLLFGTIDTWLVWKLSGKAAHITDYSNASRTLMFNIHDLEWDDELLELLTVPKNMLPEVKPSSEVYGKTIDYHFYGQEVPIAGVAGDQQAALFGQACFERGDVKNTYGTGGFMLMNTGDKAVKSESGLLTTIAYGIDGKVNYALEGSIFVSGSAIQWLRDGLRMINSAPQSESYATRVDSTEGVYVVPAFVGLGTPYWDSEARGAIFGLSRGTEKEHFIRATLESLCYQTRDVMEAMSKDSGIDVQSLRVDGGAVKNNFIMQFQADIVNTSVERPEIQETTALGAAFLAGLAVGFWESKDDIAKNWKLEEKFDPKMDEGEREKLYRGWKKAVEATQVFKTE</sequence>
<protein>
    <recommendedName>
        <fullName evidence="1">Glycerol kinase</fullName>
        <ecNumber evidence="1">2.7.1.30</ecNumber>
    </recommendedName>
    <alternativeName>
        <fullName evidence="1">ATP:glycerol 3-phosphotransferase</fullName>
    </alternativeName>
    <alternativeName>
        <fullName evidence="1">Glycerokinase</fullName>
        <shortName evidence="1">GK</shortName>
    </alternativeName>
</protein>
<comment type="function">
    <text evidence="1">Key enzyme in the regulation of glycerol uptake and metabolism. Catalyzes the phosphorylation of glycerol to yield sn-glycerol 3-phosphate.</text>
</comment>
<comment type="catalytic activity">
    <reaction evidence="1">
        <text>glycerol + ATP = sn-glycerol 3-phosphate + ADP + H(+)</text>
        <dbReference type="Rhea" id="RHEA:21644"/>
        <dbReference type="ChEBI" id="CHEBI:15378"/>
        <dbReference type="ChEBI" id="CHEBI:17754"/>
        <dbReference type="ChEBI" id="CHEBI:30616"/>
        <dbReference type="ChEBI" id="CHEBI:57597"/>
        <dbReference type="ChEBI" id="CHEBI:456216"/>
        <dbReference type="EC" id="2.7.1.30"/>
    </reaction>
</comment>
<comment type="activity regulation">
    <text evidence="1">Activated by phosphorylation and inhibited by fructose 1,6-bisphosphate (FBP).</text>
</comment>
<comment type="pathway">
    <text evidence="1">Polyol metabolism; glycerol degradation via glycerol kinase pathway; sn-glycerol 3-phosphate from glycerol: step 1/1.</text>
</comment>
<comment type="subunit">
    <text evidence="1">Homotetramer and homodimer (in equilibrium).</text>
</comment>
<comment type="PTM">
    <text evidence="1">The phosphoenolpyruvate-dependent sugar phosphotransferase system (PTS), including enzyme I, and histidine-containing protein (HPr) are required for the phosphorylation, which leads to the activation of the enzyme.</text>
</comment>
<comment type="similarity">
    <text evidence="1">Belongs to the FGGY kinase family.</text>
</comment>
<proteinExistence type="inferred from homology"/>
<feature type="chain" id="PRO_0000059494" description="Glycerol kinase">
    <location>
        <begin position="1"/>
        <end position="498"/>
    </location>
</feature>
<feature type="binding site" evidence="1">
    <location>
        <position position="12"/>
    </location>
    <ligand>
        <name>ADP</name>
        <dbReference type="ChEBI" id="CHEBI:456216"/>
    </ligand>
</feature>
<feature type="binding site" evidence="1">
    <location>
        <position position="12"/>
    </location>
    <ligand>
        <name>ATP</name>
        <dbReference type="ChEBI" id="CHEBI:30616"/>
    </ligand>
</feature>
<feature type="binding site" evidence="1">
    <location>
        <position position="12"/>
    </location>
    <ligand>
        <name>sn-glycerol 3-phosphate</name>
        <dbReference type="ChEBI" id="CHEBI:57597"/>
    </ligand>
</feature>
<feature type="binding site" evidence="1">
    <location>
        <position position="13"/>
    </location>
    <ligand>
        <name>ATP</name>
        <dbReference type="ChEBI" id="CHEBI:30616"/>
    </ligand>
</feature>
<feature type="binding site" evidence="1">
    <location>
        <position position="14"/>
    </location>
    <ligand>
        <name>ATP</name>
        <dbReference type="ChEBI" id="CHEBI:30616"/>
    </ligand>
</feature>
<feature type="binding site" evidence="1">
    <location>
        <position position="16"/>
    </location>
    <ligand>
        <name>ADP</name>
        <dbReference type="ChEBI" id="CHEBI:456216"/>
    </ligand>
</feature>
<feature type="binding site" evidence="1">
    <location>
        <position position="82"/>
    </location>
    <ligand>
        <name>glycerol</name>
        <dbReference type="ChEBI" id="CHEBI:17754"/>
    </ligand>
</feature>
<feature type="binding site" evidence="1">
    <location>
        <position position="82"/>
    </location>
    <ligand>
        <name>sn-glycerol 3-phosphate</name>
        <dbReference type="ChEBI" id="CHEBI:57597"/>
    </ligand>
</feature>
<feature type="binding site" evidence="1">
    <location>
        <position position="83"/>
    </location>
    <ligand>
        <name>glycerol</name>
        <dbReference type="ChEBI" id="CHEBI:17754"/>
    </ligand>
</feature>
<feature type="binding site" evidence="1">
    <location>
        <position position="83"/>
    </location>
    <ligand>
        <name>sn-glycerol 3-phosphate</name>
        <dbReference type="ChEBI" id="CHEBI:57597"/>
    </ligand>
</feature>
<feature type="binding site" evidence="1">
    <location>
        <position position="134"/>
    </location>
    <ligand>
        <name>glycerol</name>
        <dbReference type="ChEBI" id="CHEBI:17754"/>
    </ligand>
</feature>
<feature type="binding site" evidence="1">
    <location>
        <position position="134"/>
    </location>
    <ligand>
        <name>sn-glycerol 3-phosphate</name>
        <dbReference type="ChEBI" id="CHEBI:57597"/>
    </ligand>
</feature>
<feature type="binding site" evidence="1">
    <location>
        <position position="244"/>
    </location>
    <ligand>
        <name>glycerol</name>
        <dbReference type="ChEBI" id="CHEBI:17754"/>
    </ligand>
</feature>
<feature type="binding site" evidence="1">
    <location>
        <position position="244"/>
    </location>
    <ligand>
        <name>sn-glycerol 3-phosphate</name>
        <dbReference type="ChEBI" id="CHEBI:57597"/>
    </ligand>
</feature>
<feature type="binding site" evidence="1">
    <location>
        <position position="245"/>
    </location>
    <ligand>
        <name>glycerol</name>
        <dbReference type="ChEBI" id="CHEBI:17754"/>
    </ligand>
</feature>
<feature type="binding site" evidence="1">
    <location>
        <position position="266"/>
    </location>
    <ligand>
        <name>ADP</name>
        <dbReference type="ChEBI" id="CHEBI:456216"/>
    </ligand>
</feature>
<feature type="binding site" evidence="1">
    <location>
        <position position="266"/>
    </location>
    <ligand>
        <name>ATP</name>
        <dbReference type="ChEBI" id="CHEBI:30616"/>
    </ligand>
</feature>
<feature type="binding site" evidence="1">
    <location>
        <position position="309"/>
    </location>
    <ligand>
        <name>ADP</name>
        <dbReference type="ChEBI" id="CHEBI:456216"/>
    </ligand>
</feature>
<feature type="binding site" evidence="1">
    <location>
        <position position="309"/>
    </location>
    <ligand>
        <name>ATP</name>
        <dbReference type="ChEBI" id="CHEBI:30616"/>
    </ligand>
</feature>
<feature type="binding site" evidence="1">
    <location>
        <position position="313"/>
    </location>
    <ligand>
        <name>ATP</name>
        <dbReference type="ChEBI" id="CHEBI:30616"/>
    </ligand>
</feature>
<feature type="binding site" evidence="1">
    <location>
        <position position="410"/>
    </location>
    <ligand>
        <name>ADP</name>
        <dbReference type="ChEBI" id="CHEBI:456216"/>
    </ligand>
</feature>
<feature type="binding site" evidence="1">
    <location>
        <position position="410"/>
    </location>
    <ligand>
        <name>ATP</name>
        <dbReference type="ChEBI" id="CHEBI:30616"/>
    </ligand>
</feature>
<feature type="binding site" evidence="1">
    <location>
        <position position="414"/>
    </location>
    <ligand>
        <name>ADP</name>
        <dbReference type="ChEBI" id="CHEBI:456216"/>
    </ligand>
</feature>
<feature type="modified residue" description="Phosphohistidine; by HPr" evidence="1">
    <location>
        <position position="230"/>
    </location>
</feature>
<organism>
    <name type="scientific">Staphylococcus aureus (strain MW2)</name>
    <dbReference type="NCBI Taxonomy" id="196620"/>
    <lineage>
        <taxon>Bacteria</taxon>
        <taxon>Bacillati</taxon>
        <taxon>Bacillota</taxon>
        <taxon>Bacilli</taxon>
        <taxon>Bacillales</taxon>
        <taxon>Staphylococcaceae</taxon>
        <taxon>Staphylococcus</taxon>
    </lineage>
</organism>
<accession>Q8NWX7</accession>
<dbReference type="EC" id="2.7.1.30" evidence="1"/>
<dbReference type="EMBL" id="BA000033">
    <property type="protein sequence ID" value="BAB95048.1"/>
    <property type="molecule type" value="Genomic_DNA"/>
</dbReference>
<dbReference type="RefSeq" id="WP_000417376.1">
    <property type="nucleotide sequence ID" value="NC_003923.1"/>
</dbReference>
<dbReference type="SMR" id="Q8NWX7"/>
<dbReference type="KEGG" id="sam:MW1183"/>
<dbReference type="HOGENOM" id="CLU_009281_2_3_9"/>
<dbReference type="UniPathway" id="UPA00618">
    <property type="reaction ID" value="UER00672"/>
</dbReference>
<dbReference type="GO" id="GO:0005829">
    <property type="term" value="C:cytosol"/>
    <property type="evidence" value="ECO:0007669"/>
    <property type="project" value="TreeGrafter"/>
</dbReference>
<dbReference type="GO" id="GO:0005524">
    <property type="term" value="F:ATP binding"/>
    <property type="evidence" value="ECO:0007669"/>
    <property type="project" value="UniProtKB-UniRule"/>
</dbReference>
<dbReference type="GO" id="GO:0004370">
    <property type="term" value="F:glycerol kinase activity"/>
    <property type="evidence" value="ECO:0000250"/>
    <property type="project" value="UniProtKB"/>
</dbReference>
<dbReference type="GO" id="GO:0019563">
    <property type="term" value="P:glycerol catabolic process"/>
    <property type="evidence" value="ECO:0007669"/>
    <property type="project" value="UniProtKB-UniRule"/>
</dbReference>
<dbReference type="GO" id="GO:0006071">
    <property type="term" value="P:glycerol metabolic process"/>
    <property type="evidence" value="ECO:0000250"/>
    <property type="project" value="UniProtKB"/>
</dbReference>
<dbReference type="GO" id="GO:0006072">
    <property type="term" value="P:glycerol-3-phosphate metabolic process"/>
    <property type="evidence" value="ECO:0007669"/>
    <property type="project" value="InterPro"/>
</dbReference>
<dbReference type="CDD" id="cd07786">
    <property type="entry name" value="FGGY_EcGK_like"/>
    <property type="match status" value="1"/>
</dbReference>
<dbReference type="FunFam" id="3.30.420.40:FF:000007">
    <property type="entry name" value="Glycerol kinase"/>
    <property type="match status" value="1"/>
</dbReference>
<dbReference type="FunFam" id="3.30.420.40:FF:000008">
    <property type="entry name" value="Glycerol kinase"/>
    <property type="match status" value="1"/>
</dbReference>
<dbReference type="Gene3D" id="3.30.420.40">
    <property type="match status" value="2"/>
</dbReference>
<dbReference type="HAMAP" id="MF_00186">
    <property type="entry name" value="Glycerol_kin"/>
    <property type="match status" value="1"/>
</dbReference>
<dbReference type="InterPro" id="IPR043129">
    <property type="entry name" value="ATPase_NBD"/>
</dbReference>
<dbReference type="InterPro" id="IPR000577">
    <property type="entry name" value="Carb_kinase_FGGY"/>
</dbReference>
<dbReference type="InterPro" id="IPR018483">
    <property type="entry name" value="Carb_kinase_FGGY_CS"/>
</dbReference>
<dbReference type="InterPro" id="IPR018485">
    <property type="entry name" value="FGGY_C"/>
</dbReference>
<dbReference type="InterPro" id="IPR018484">
    <property type="entry name" value="FGGY_N"/>
</dbReference>
<dbReference type="InterPro" id="IPR005999">
    <property type="entry name" value="Glycerol_kin"/>
</dbReference>
<dbReference type="NCBIfam" id="TIGR01311">
    <property type="entry name" value="glycerol_kin"/>
    <property type="match status" value="1"/>
</dbReference>
<dbReference type="NCBIfam" id="NF000756">
    <property type="entry name" value="PRK00047.1"/>
    <property type="match status" value="1"/>
</dbReference>
<dbReference type="PANTHER" id="PTHR10196:SF69">
    <property type="entry name" value="GLYCEROL KINASE"/>
    <property type="match status" value="1"/>
</dbReference>
<dbReference type="PANTHER" id="PTHR10196">
    <property type="entry name" value="SUGAR KINASE"/>
    <property type="match status" value="1"/>
</dbReference>
<dbReference type="Pfam" id="PF02782">
    <property type="entry name" value="FGGY_C"/>
    <property type="match status" value="1"/>
</dbReference>
<dbReference type="Pfam" id="PF00370">
    <property type="entry name" value="FGGY_N"/>
    <property type="match status" value="1"/>
</dbReference>
<dbReference type="PIRSF" id="PIRSF000538">
    <property type="entry name" value="GlpK"/>
    <property type="match status" value="1"/>
</dbReference>
<dbReference type="SUPFAM" id="SSF53067">
    <property type="entry name" value="Actin-like ATPase domain"/>
    <property type="match status" value="2"/>
</dbReference>
<dbReference type="PROSITE" id="PS00445">
    <property type="entry name" value="FGGY_KINASES_2"/>
    <property type="match status" value="1"/>
</dbReference>
<name>GLPK_STAAW</name>
<reference key="1">
    <citation type="journal article" date="2002" name="Lancet">
        <title>Genome and virulence determinants of high virulence community-acquired MRSA.</title>
        <authorList>
            <person name="Baba T."/>
            <person name="Takeuchi F."/>
            <person name="Kuroda M."/>
            <person name="Yuzawa H."/>
            <person name="Aoki K."/>
            <person name="Oguchi A."/>
            <person name="Nagai Y."/>
            <person name="Iwama N."/>
            <person name="Asano K."/>
            <person name="Naimi T."/>
            <person name="Kuroda H."/>
            <person name="Cui L."/>
            <person name="Yamamoto K."/>
            <person name="Hiramatsu K."/>
        </authorList>
    </citation>
    <scope>NUCLEOTIDE SEQUENCE [LARGE SCALE GENOMIC DNA]</scope>
    <source>
        <strain>MW2</strain>
    </source>
</reference>
<keyword id="KW-0067">ATP-binding</keyword>
<keyword id="KW-0319">Glycerol metabolism</keyword>
<keyword id="KW-0418">Kinase</keyword>
<keyword id="KW-0547">Nucleotide-binding</keyword>
<keyword id="KW-0597">Phosphoprotein</keyword>
<keyword id="KW-0808">Transferase</keyword>